<organism evidence="11">
    <name type="scientific">Arabidopsis thaliana</name>
    <name type="common">Mouse-ear cress</name>
    <dbReference type="NCBI Taxonomy" id="3702"/>
    <lineage>
        <taxon>Eukaryota</taxon>
        <taxon>Viridiplantae</taxon>
        <taxon>Streptophyta</taxon>
        <taxon>Embryophyta</taxon>
        <taxon>Tracheophyta</taxon>
        <taxon>Spermatophyta</taxon>
        <taxon>Magnoliopsida</taxon>
        <taxon>eudicotyledons</taxon>
        <taxon>Gunneridae</taxon>
        <taxon>Pentapetalae</taxon>
        <taxon>rosids</taxon>
        <taxon>malvids</taxon>
        <taxon>Brassicales</taxon>
        <taxon>Brassicaceae</taxon>
        <taxon>Camelineae</taxon>
        <taxon>Arabidopsis</taxon>
    </lineage>
</organism>
<gene>
    <name evidence="5" type="primary">BCHB</name>
    <name evidence="8" type="ordered locus">At1g58230</name>
    <name evidence="10" type="ORF">F16M22.8</name>
    <name evidence="9" type="ORF">T18I24.16</name>
</gene>
<name>BCHB_ARATH</name>
<proteinExistence type="predicted"/>
<sequence length="2604" mass="292779">MESDSVAGSASSSDAAASHLPSVSVLLDALEQSASTPRIANGLSQRLLRSLQFSNENKLSFKALNGACRVLRLACIQAKESRKSGCVSPLVESSDCGVIVDSPHKKSDSSHTEDCWFECVESCVGIFTEFFSSTNDAKVYVLRSSVCVDCLFELFWEKAVRNNVMKLIIDLMKIRPLCEEDKSAKLQVCSKYLETFTQVKERENDSVDLSVDLLAGMRDLIKSDSRYYQALFREGECFLHIVSLLNGNLDEANGEKLVLNVLQTLTSLLANNDTSKFAFKALAGKGYQTLQSLLLDFFQWKPTQRLLDALLDMLVDGKFDDKGSALIKNEDVIILYLNVLQKSSESLQCYGLNLFQQLLRDSISNRASCVRAGMLHLLLDWFSLENDDSVILKITQLTQTIGGHSISGKDIRKIFALLRSERVGNQQRYRSLLLACLLSMLNEKGPTGFFDMNGVESGIVIRTPVQWPANKGFSFCCWLRVESFPGDGKMGIFSFMSKNGKGCFAALGKDGLSYVSLNLKRQCVNVHTNLVCKKWHFICVSHSIGRAFWGGSLLRCYVNGDLVSSERCSYPKVTDVLTSCLIGTRITLPHIQDNDGLESIRDVFPFFGQIGPVYLFNDSLSSEQVQAIYSLGPSYMYAFLENEMTCPFSDNPFPSGILDGKDGLASKVSFGLNAQASDGRRLFNVSRVSDHLQERLAFEADIMVGTQLCSRRLLQQIIYCVGGISVFFPLITQSDRCESETLNEETSAMPTKERMTAEVIELIASVLDENPANQQQMHLLAGFPILGFLLQSIQPKQLNLETLSSLKHLFNVISSSGFAEQLVEDAISSIFLNPHIWLHAAYNVQRELYMFLIQQLDNDPRLLGSLCRLPRVIDIVWNFYWESERYCKGSKPLMHPTRTIAERPSRDEIHKIRLLLLSLGEMSLRHNISSGDVKALTAFFETCQDVACIEDVLHMVIRAISQTSVLVSFLEQVNLIGGCHIFVDLLQRDYEPIRLLSLQFLGRLLYDVPSERKGPKFFNLAVGRTKSLSQGHKKIGARTQPIFLAMSDRLFQYPQTDNLRATLFDVLLGGASPKQVLQKHNQVDKHRSKPSNSHFFLPQIFVFIFEFLSGCKDGLARMKIISDILDLLDSNPMNVEALMEFGWSAWLTASMKLDVIKDYRSELLNHDDLALNEQHFVRGLFCVVLCHYILSVKGGWQQLEETVNFILLQSEHNDVPYRSFLRDLYEDLIQRLVELSSEDNIFLSHPCRDNVLYLLRLVDEMLVREFGSRLLFPAISTDFSEDLLQLGNREDPTLGLDESFQRFLTEEISRNTECQQSCTTVTELMTNERWWNLYDNLWKIICDINGRGPVKMSPKSLATGPSIGQRARGLVESLNVPAAEMAAVVVSGGIGSALSGKMNKNVDKAMLLRGEKCPRIVFRLVTLYLCMSSLEKATRCVQQVTSLLPSFLAADDEQSKSRLHLFIGCLLYVRSQYGKLDDGARFHVISHLIRETVSCGKSILATSGMNKDDSSDSGGIFKEMGSIQNLIHKDRVLAAVTDETTYMKTLISDRTRQVQALGERNNETLSIECNSKKAFDGELQNVLKTVVTWDENRRVSVQLSHEEQQQNVTEKWIHMLRSLMDERGPWSATPFPNNILNRWKLDRTEDSWRRRPKLRRNYHFDERLCHPPSTSTATENETSNVINESKSGVIHIPEQMKKFLLKGIRRITDEGGSDSCENDSSQAEQSFMDTSADIQFSELVRTSSGLKDVVQDKVDASSLEVGTSEVLTSVPCVLVTPKRKLAGWLAVMKNVLHFSGEFLVEGTGGSAVFKNFSTSKGSDVTKAENKQNLVKWSSPYDSETFLDLESGNKNKKPLKKVKRHRRWKIGKVKSVHWTRYLLQYTALEIFFQESVPPVFLNFASQKNAKEVGMLIVSTRNEFLFPKNVPRDRTAMISFVDRRIAMEMAETARDRWRRREITNFEYLMILNTLAGRSYNDLTQYPVFPWVVADYSSETLDFSKASTFRDLSKPVGALDTRRFEIFEDRYHSFSDPDIPSFYYGSHYSSMGSVLYYLLRLEPFTSLHRSLQGGKFDHADRLFQSVEGSFRNCLSNTSDVKELIPEFFYMPEFLVNSNSYHLGVKQDGEPLGEVCLPPWAKGSPEMFIARNREALESEYVSSHLHDWIDLIFGHKQRGKPAVEAANIFYYLTYEGAVDVENMEDQLQISAIEDQIANFGQTPIQIFRKKHPRRGPPIPIAHPLYFAPASINLSSILPATTHSPSAVLYVGVVDSNIVLVNQGLTLSVKIWLTTQLHSGGNFTFSSAQDPFFGVGSDVLSPRNIGSPLADNVELGSQCFAAMQMPLENFLVSCGNWENSFHVISLTDGRVVQSIRHHKDVVSCVAVTADSTILATGSYDTTVMVWDILRMRTPEKRVRNTHAEVLRKDIVIADAPSHILCGHDDIITCLYVSTDLDIVISGSKDGTCVFHTLREGRYIRSLKHPSGSAVSKLAASHHGRIVLYGDDDLSLHLYSINGKHLASSESNGRINCLELSKCGEFLVSAGDQGQIIVRSMNTLEVVKRYNGAGKIITSLTVTQEECFLAGTKDGALLVYSIENPQHRKPSPIWSIKS</sequence>
<accession>F4I9T0</accession>
<accession>Q9C6Q7</accession>
<accession>Q9C728</accession>
<comment type="function">
    <text evidence="7">May be involved in the suppression of BCHC1 activity.</text>
</comment>
<comment type="disruption phenotype">
    <text evidence="4">No visible phenotype.</text>
</comment>
<comment type="sequence caution" evidence="6">
    <conflict type="erroneous gene model prediction">
        <sequence resource="EMBL-CDS" id="AAG50767"/>
    </conflict>
</comment>
<comment type="sequence caution" evidence="6">
    <conflict type="erroneous gene model prediction">
        <sequence resource="EMBL-CDS" id="AAG50953"/>
    </conflict>
</comment>
<evidence type="ECO:0000255" key="1"/>
<evidence type="ECO:0000255" key="2">
    <source>
        <dbReference type="PROSITE-ProRule" id="PRU00026"/>
    </source>
</evidence>
<evidence type="ECO:0000255" key="3">
    <source>
        <dbReference type="PROSITE-ProRule" id="PRU01119"/>
    </source>
</evidence>
<evidence type="ECO:0000269" key="4">
    <source>
    </source>
</evidence>
<evidence type="ECO:0000303" key="5">
    <source>
    </source>
</evidence>
<evidence type="ECO:0000305" key="6"/>
<evidence type="ECO:0000305" key="7">
    <source>
    </source>
</evidence>
<evidence type="ECO:0000312" key="8">
    <source>
        <dbReference type="Araport" id="AT1G58230"/>
    </source>
</evidence>
<evidence type="ECO:0000312" key="9">
    <source>
        <dbReference type="EMBL" id="AAG50767.1"/>
    </source>
</evidence>
<evidence type="ECO:0000312" key="10">
    <source>
        <dbReference type="EMBL" id="AAG50953.1"/>
    </source>
</evidence>
<evidence type="ECO:0000312" key="11">
    <source>
        <dbReference type="Proteomes" id="UP000006548"/>
    </source>
</evidence>
<feature type="chain" id="PRO_0000434034" description="BEACH domain-containing protein B">
    <location>
        <begin position="1"/>
        <end position="2604"/>
    </location>
</feature>
<feature type="domain" description="BEACH-type PH" evidence="3">
    <location>
        <begin position="1761"/>
        <end position="1912"/>
    </location>
</feature>
<feature type="domain" description="BEACH" evidence="2">
    <location>
        <begin position="1936"/>
        <end position="2226"/>
    </location>
</feature>
<feature type="repeat" description="WD 1" evidence="1">
    <location>
        <begin position="2254"/>
        <end position="2293"/>
    </location>
</feature>
<feature type="repeat" description="WD 2" evidence="1">
    <location>
        <begin position="2368"/>
        <end position="2407"/>
    </location>
</feature>
<feature type="repeat" description="WD 3" evidence="1">
    <location>
        <begin position="2433"/>
        <end position="2474"/>
    </location>
</feature>
<feature type="repeat" description="WD 4" evidence="1">
    <location>
        <begin position="2476"/>
        <end position="2515"/>
    </location>
</feature>
<feature type="repeat" description="WD 5" evidence="1">
    <location>
        <begin position="2516"/>
        <end position="2557"/>
    </location>
</feature>
<feature type="repeat" description="WD 6" evidence="1">
    <location>
        <begin position="2558"/>
        <end position="2596"/>
    </location>
</feature>
<reference key="1">
    <citation type="journal article" date="2000" name="Nature">
        <title>Sequence and analysis of chromosome 1 of the plant Arabidopsis thaliana.</title>
        <authorList>
            <person name="Theologis A."/>
            <person name="Ecker J.R."/>
            <person name="Palm C.J."/>
            <person name="Federspiel N.A."/>
            <person name="Kaul S."/>
            <person name="White O."/>
            <person name="Alonso J."/>
            <person name="Altafi H."/>
            <person name="Araujo R."/>
            <person name="Bowman C.L."/>
            <person name="Brooks S.Y."/>
            <person name="Buehler E."/>
            <person name="Chan A."/>
            <person name="Chao Q."/>
            <person name="Chen H."/>
            <person name="Cheuk R.F."/>
            <person name="Chin C.W."/>
            <person name="Chung M.K."/>
            <person name="Conn L."/>
            <person name="Conway A.B."/>
            <person name="Conway A.R."/>
            <person name="Creasy T.H."/>
            <person name="Dewar K."/>
            <person name="Dunn P."/>
            <person name="Etgu P."/>
            <person name="Feldblyum T.V."/>
            <person name="Feng J.-D."/>
            <person name="Fong B."/>
            <person name="Fujii C.Y."/>
            <person name="Gill J.E."/>
            <person name="Goldsmith A.D."/>
            <person name="Haas B."/>
            <person name="Hansen N.F."/>
            <person name="Hughes B."/>
            <person name="Huizar L."/>
            <person name="Hunter J.L."/>
            <person name="Jenkins J."/>
            <person name="Johnson-Hopson C."/>
            <person name="Khan S."/>
            <person name="Khaykin E."/>
            <person name="Kim C.J."/>
            <person name="Koo H.L."/>
            <person name="Kremenetskaia I."/>
            <person name="Kurtz D.B."/>
            <person name="Kwan A."/>
            <person name="Lam B."/>
            <person name="Langin-Hooper S."/>
            <person name="Lee A."/>
            <person name="Lee J.M."/>
            <person name="Lenz C.A."/>
            <person name="Li J.H."/>
            <person name="Li Y.-P."/>
            <person name="Lin X."/>
            <person name="Liu S.X."/>
            <person name="Liu Z.A."/>
            <person name="Luros J.S."/>
            <person name="Maiti R."/>
            <person name="Marziali A."/>
            <person name="Militscher J."/>
            <person name="Miranda M."/>
            <person name="Nguyen M."/>
            <person name="Nierman W.C."/>
            <person name="Osborne B.I."/>
            <person name="Pai G."/>
            <person name="Peterson J."/>
            <person name="Pham P.K."/>
            <person name="Rizzo M."/>
            <person name="Rooney T."/>
            <person name="Rowley D."/>
            <person name="Sakano H."/>
            <person name="Salzberg S.L."/>
            <person name="Schwartz J.R."/>
            <person name="Shinn P."/>
            <person name="Southwick A.M."/>
            <person name="Sun H."/>
            <person name="Tallon L.J."/>
            <person name="Tambunga G."/>
            <person name="Toriumi M.J."/>
            <person name="Town C.D."/>
            <person name="Utterback T."/>
            <person name="Van Aken S."/>
            <person name="Vaysberg M."/>
            <person name="Vysotskaia V.S."/>
            <person name="Walker M."/>
            <person name="Wu D."/>
            <person name="Yu G."/>
            <person name="Fraser C.M."/>
            <person name="Venter J.C."/>
            <person name="Davis R.W."/>
        </authorList>
    </citation>
    <scope>NUCLEOTIDE SEQUENCE [LARGE SCALE GENOMIC DNA]</scope>
    <source>
        <strain>cv. Columbia</strain>
    </source>
</reference>
<reference evidence="11" key="2">
    <citation type="journal article" date="2017" name="Plant J.">
        <title>Araport11: a complete reannotation of the Arabidopsis thaliana reference genome.</title>
        <authorList>
            <person name="Cheng C.Y."/>
            <person name="Krishnakumar V."/>
            <person name="Chan A.P."/>
            <person name="Thibaud-Nissen F."/>
            <person name="Schobel S."/>
            <person name="Town C.D."/>
        </authorList>
    </citation>
    <scope>GENOME REANNOTATION</scope>
    <source>
        <strain>cv. Columbia</strain>
    </source>
</reference>
<reference key="3">
    <citation type="journal article" date="2015" name="Mol. Plant">
        <title>BEACH-domain proteins act together in a cascade to mediate vacuolar protein trafficking and disease resistance in Arabidopsis.</title>
        <authorList>
            <person name="Teh O.K."/>
            <person name="Hatsugai N."/>
            <person name="Tamura K."/>
            <person name="Fuji K."/>
            <person name="Tabata R."/>
            <person name="Yamaguchi K."/>
            <person name="Shingenobu S."/>
            <person name="Yamada M."/>
            <person name="Hasebe M."/>
            <person name="Sawa S."/>
            <person name="Shimada T."/>
            <person name="Hara-Nishimura I."/>
        </authorList>
    </citation>
    <scope>GENE FAMILY</scope>
    <scope>NOMENCLATURE</scope>
    <scope>DISRUPTION PHENOTYPE</scope>
</reference>
<dbReference type="EMBL" id="AC073943">
    <property type="protein sequence ID" value="AAG50953.1"/>
    <property type="status" value="ALT_SEQ"/>
    <property type="molecule type" value="Genomic_DNA"/>
</dbReference>
<dbReference type="EMBL" id="AC079131">
    <property type="protein sequence ID" value="AAG50767.1"/>
    <property type="status" value="ALT_SEQ"/>
    <property type="molecule type" value="Genomic_DNA"/>
</dbReference>
<dbReference type="EMBL" id="CP002684">
    <property type="protein sequence ID" value="AEE33518.1"/>
    <property type="molecule type" value="Genomic_DNA"/>
</dbReference>
<dbReference type="PIR" id="H96615">
    <property type="entry name" value="H96615"/>
</dbReference>
<dbReference type="RefSeq" id="NP_564728.3">
    <property type="nucleotide sequence ID" value="NM_104604.4"/>
</dbReference>
<dbReference type="SMR" id="F4I9T0"/>
<dbReference type="FunCoup" id="F4I9T0">
    <property type="interactions" value="2721"/>
</dbReference>
<dbReference type="STRING" id="3702.F4I9T0"/>
<dbReference type="iPTMnet" id="F4I9T0"/>
<dbReference type="PaxDb" id="3702-AT1G58230.1"/>
<dbReference type="EnsemblPlants" id="AT1G58230.1">
    <property type="protein sequence ID" value="AT1G58230.1"/>
    <property type="gene ID" value="AT1G58230"/>
</dbReference>
<dbReference type="GeneID" id="842191"/>
<dbReference type="Gramene" id="AT1G58230.1">
    <property type="protein sequence ID" value="AT1G58230.1"/>
    <property type="gene ID" value="AT1G58230"/>
</dbReference>
<dbReference type="KEGG" id="ath:AT1G58230"/>
<dbReference type="Araport" id="AT1G58230"/>
<dbReference type="TAIR" id="AT1G58230">
    <property type="gene designation" value="BCHB"/>
</dbReference>
<dbReference type="eggNOG" id="KOG1787">
    <property type="taxonomic scope" value="Eukaryota"/>
</dbReference>
<dbReference type="HOGENOM" id="CLU_000218_4_1_1"/>
<dbReference type="InParanoid" id="F4I9T0"/>
<dbReference type="PRO" id="PR:F4I9T0"/>
<dbReference type="Proteomes" id="UP000006548">
    <property type="component" value="Chromosome 1"/>
</dbReference>
<dbReference type="ExpressionAtlas" id="F4I9T0">
    <property type="expression patterns" value="baseline and differential"/>
</dbReference>
<dbReference type="GO" id="GO:0005739">
    <property type="term" value="C:mitochondrion"/>
    <property type="evidence" value="ECO:0007005"/>
    <property type="project" value="TAIR"/>
</dbReference>
<dbReference type="CDD" id="cd06071">
    <property type="entry name" value="Beach"/>
    <property type="match status" value="1"/>
</dbReference>
<dbReference type="FunFam" id="2.130.10.10:FF:001404">
    <property type="entry name" value="Binding protein"/>
    <property type="match status" value="1"/>
</dbReference>
<dbReference type="FunFam" id="1.10.1540.10:FF:000001">
    <property type="entry name" value="neurobeachin isoform X1"/>
    <property type="match status" value="1"/>
</dbReference>
<dbReference type="Gene3D" id="2.60.120.200">
    <property type="match status" value="1"/>
</dbReference>
<dbReference type="Gene3D" id="1.10.1540.10">
    <property type="entry name" value="BEACH domain"/>
    <property type="match status" value="1"/>
</dbReference>
<dbReference type="Gene3D" id="1.25.10.10">
    <property type="entry name" value="Leucine-rich Repeat Variant"/>
    <property type="match status" value="1"/>
</dbReference>
<dbReference type="Gene3D" id="2.30.29.30">
    <property type="entry name" value="Pleckstrin-homology domain (PH domain)/Phosphotyrosine-binding domain (PTB)"/>
    <property type="match status" value="1"/>
</dbReference>
<dbReference type="Gene3D" id="2.130.10.10">
    <property type="entry name" value="YVTN repeat-like/Quinoprotein amine dehydrogenase"/>
    <property type="match status" value="1"/>
</dbReference>
<dbReference type="InterPro" id="IPR011989">
    <property type="entry name" value="ARM-like"/>
</dbReference>
<dbReference type="InterPro" id="IPR016024">
    <property type="entry name" value="ARM-type_fold"/>
</dbReference>
<dbReference type="InterPro" id="IPR000409">
    <property type="entry name" value="BEACH_dom"/>
</dbReference>
<dbReference type="InterPro" id="IPR036372">
    <property type="entry name" value="BEACH_dom_sf"/>
</dbReference>
<dbReference type="InterPro" id="IPR050865">
    <property type="entry name" value="BEACH_Domain"/>
</dbReference>
<dbReference type="InterPro" id="IPR013320">
    <property type="entry name" value="ConA-like_dom_sf"/>
</dbReference>
<dbReference type="InterPro" id="IPR046851">
    <property type="entry name" value="NBCH_WD40"/>
</dbReference>
<dbReference type="InterPro" id="IPR031570">
    <property type="entry name" value="NBEA/BDCP_DUF4704"/>
</dbReference>
<dbReference type="InterPro" id="IPR046852">
    <property type="entry name" value="Neurobeachin_a-sol"/>
</dbReference>
<dbReference type="InterPro" id="IPR023362">
    <property type="entry name" value="PH-BEACH_dom"/>
</dbReference>
<dbReference type="InterPro" id="IPR011993">
    <property type="entry name" value="PH-like_dom_sf"/>
</dbReference>
<dbReference type="InterPro" id="IPR015943">
    <property type="entry name" value="WD40/YVTN_repeat-like_dom_sf"/>
</dbReference>
<dbReference type="InterPro" id="IPR019775">
    <property type="entry name" value="WD40_repeat_CS"/>
</dbReference>
<dbReference type="InterPro" id="IPR036322">
    <property type="entry name" value="WD40_repeat_dom_sf"/>
</dbReference>
<dbReference type="InterPro" id="IPR001680">
    <property type="entry name" value="WD40_rpt"/>
</dbReference>
<dbReference type="PANTHER" id="PTHR13743:SF112">
    <property type="entry name" value="BEACH DOMAIN-CONTAINING PROTEIN"/>
    <property type="match status" value="1"/>
</dbReference>
<dbReference type="PANTHER" id="PTHR13743">
    <property type="entry name" value="BEIGE/BEACH-RELATED"/>
    <property type="match status" value="1"/>
</dbReference>
<dbReference type="Pfam" id="PF02138">
    <property type="entry name" value="Beach"/>
    <property type="match status" value="1"/>
</dbReference>
<dbReference type="Pfam" id="PF15787">
    <property type="entry name" value="DUF4704"/>
    <property type="match status" value="1"/>
</dbReference>
<dbReference type="Pfam" id="PF16057">
    <property type="entry name" value="DUF4800"/>
    <property type="match status" value="1"/>
</dbReference>
<dbReference type="Pfam" id="PF13385">
    <property type="entry name" value="Laminin_G_3"/>
    <property type="match status" value="1"/>
</dbReference>
<dbReference type="Pfam" id="PF20426">
    <property type="entry name" value="NBCH_WD40"/>
    <property type="match status" value="1"/>
</dbReference>
<dbReference type="Pfam" id="PF20425">
    <property type="entry name" value="Neurobeachin"/>
    <property type="match status" value="1"/>
</dbReference>
<dbReference type="Pfam" id="PF14844">
    <property type="entry name" value="PH_BEACH"/>
    <property type="match status" value="1"/>
</dbReference>
<dbReference type="SMART" id="SM01026">
    <property type="entry name" value="Beach"/>
    <property type="match status" value="1"/>
</dbReference>
<dbReference type="SMART" id="SM00320">
    <property type="entry name" value="WD40"/>
    <property type="match status" value="5"/>
</dbReference>
<dbReference type="SUPFAM" id="SSF48371">
    <property type="entry name" value="ARM repeat"/>
    <property type="match status" value="1"/>
</dbReference>
<dbReference type="SUPFAM" id="SSF81837">
    <property type="entry name" value="BEACH domain"/>
    <property type="match status" value="1"/>
</dbReference>
<dbReference type="SUPFAM" id="SSF49899">
    <property type="entry name" value="Concanavalin A-like lectins/glucanases"/>
    <property type="match status" value="1"/>
</dbReference>
<dbReference type="SUPFAM" id="SSF50729">
    <property type="entry name" value="PH domain-like"/>
    <property type="match status" value="1"/>
</dbReference>
<dbReference type="SUPFAM" id="SSF50978">
    <property type="entry name" value="WD40 repeat-like"/>
    <property type="match status" value="1"/>
</dbReference>
<dbReference type="PROSITE" id="PS50197">
    <property type="entry name" value="BEACH"/>
    <property type="match status" value="1"/>
</dbReference>
<dbReference type="PROSITE" id="PS51783">
    <property type="entry name" value="PH_BEACH"/>
    <property type="match status" value="1"/>
</dbReference>
<dbReference type="PROSITE" id="PS00678">
    <property type="entry name" value="WD_REPEATS_1"/>
    <property type="match status" value="1"/>
</dbReference>
<dbReference type="PROSITE" id="PS50082">
    <property type="entry name" value="WD_REPEATS_2"/>
    <property type="match status" value="1"/>
</dbReference>
<dbReference type="PROSITE" id="PS50294">
    <property type="entry name" value="WD_REPEATS_REGION"/>
    <property type="match status" value="1"/>
</dbReference>
<keyword id="KW-1185">Reference proteome</keyword>
<keyword id="KW-0677">Repeat</keyword>
<keyword id="KW-0853">WD repeat</keyword>
<protein>
    <recommendedName>
        <fullName evidence="5">BEACH domain-containing protein B</fullName>
    </recommendedName>
    <alternativeName>
        <fullName evidence="6">BEACH-domain homolog B</fullName>
    </alternativeName>
</protein>